<name>NATX4_CENSC</name>
<proteinExistence type="evidence at protein level"/>
<comment type="function">
    <text evidence="5">Probable sodium channel inhibitor.</text>
</comment>
<comment type="subcellular location">
    <subcellularLocation>
        <location evidence="2">Secreted</location>
    </subcellularLocation>
</comment>
<comment type="tissue specificity">
    <text evidence="6">Expressed by the venom gland.</text>
</comment>
<comment type="domain">
    <text evidence="5">Has the structural arrangement of an alpha-helix connected to antiparallel beta-sheets by disulfide bonds (CS-alpha/beta).</text>
</comment>
<comment type="miscellaneous">
    <text evidence="3">Negative results: has no effect on Nav1.8/SCN10A sodium channel from the grasshopper mouse, a species pain-resistant to C.sculpturatus venom.</text>
</comment>
<comment type="similarity">
    <text evidence="5">Belongs to the long (4 C-C) scorpion toxin superfamily. Sodium channel inhibitor family.</text>
</comment>
<sequence>KEGYLVNKETGCKLACVTTGENKNCKLDCKNQGGSKGYCLLFRCFCEGLSESTPTFPIPGKTCSGK</sequence>
<organism>
    <name type="scientific">Centruroides sculpturatus</name>
    <name type="common">Arizona bark scorpion</name>
    <dbReference type="NCBI Taxonomy" id="218467"/>
    <lineage>
        <taxon>Eukaryota</taxon>
        <taxon>Metazoa</taxon>
        <taxon>Ecdysozoa</taxon>
        <taxon>Arthropoda</taxon>
        <taxon>Chelicerata</taxon>
        <taxon>Arachnida</taxon>
        <taxon>Scorpiones</taxon>
        <taxon>Buthida</taxon>
        <taxon>Buthoidea</taxon>
        <taxon>Buthidae</taxon>
        <taxon>Centruroides</taxon>
    </lineage>
</organism>
<keyword id="KW-0903">Direct protein sequencing</keyword>
<keyword id="KW-1015">Disulfide bond</keyword>
<keyword id="KW-0872">Ion channel impairing toxin</keyword>
<keyword id="KW-0528">Neurotoxin</keyword>
<keyword id="KW-0964">Secreted</keyword>
<keyword id="KW-0800">Toxin</keyword>
<keyword id="KW-0738">Voltage-gated sodium channel impairing toxin</keyword>
<dbReference type="SMR" id="P0DRC5"/>
<dbReference type="GO" id="GO:0005576">
    <property type="term" value="C:extracellular region"/>
    <property type="evidence" value="ECO:0007669"/>
    <property type="project" value="UniProtKB-SubCell"/>
</dbReference>
<dbReference type="GO" id="GO:0019871">
    <property type="term" value="F:sodium channel inhibitor activity"/>
    <property type="evidence" value="ECO:0007669"/>
    <property type="project" value="InterPro"/>
</dbReference>
<dbReference type="GO" id="GO:0090729">
    <property type="term" value="F:toxin activity"/>
    <property type="evidence" value="ECO:0007669"/>
    <property type="project" value="UniProtKB-KW"/>
</dbReference>
<dbReference type="GO" id="GO:0006952">
    <property type="term" value="P:defense response"/>
    <property type="evidence" value="ECO:0007669"/>
    <property type="project" value="InterPro"/>
</dbReference>
<dbReference type="CDD" id="cd23106">
    <property type="entry name" value="neurotoxins_LC_scorpion"/>
    <property type="match status" value="1"/>
</dbReference>
<dbReference type="Gene3D" id="3.30.30.10">
    <property type="entry name" value="Knottin, scorpion toxin-like"/>
    <property type="match status" value="1"/>
</dbReference>
<dbReference type="InterPro" id="IPR044062">
    <property type="entry name" value="LCN-type_CS_alpha_beta_dom"/>
</dbReference>
<dbReference type="InterPro" id="IPR003614">
    <property type="entry name" value="Scorpion_toxin-like"/>
</dbReference>
<dbReference type="InterPro" id="IPR036574">
    <property type="entry name" value="Scorpion_toxin-like_sf"/>
</dbReference>
<dbReference type="InterPro" id="IPR018218">
    <property type="entry name" value="Scorpion_toxinL"/>
</dbReference>
<dbReference type="InterPro" id="IPR002061">
    <property type="entry name" value="Scorpion_toxinL/defensin"/>
</dbReference>
<dbReference type="Pfam" id="PF00537">
    <property type="entry name" value="Toxin_3"/>
    <property type="match status" value="1"/>
</dbReference>
<dbReference type="PRINTS" id="PR00285">
    <property type="entry name" value="SCORPNTOXIN"/>
</dbReference>
<dbReference type="SMART" id="SM00505">
    <property type="entry name" value="Knot1"/>
    <property type="match status" value="1"/>
</dbReference>
<dbReference type="SUPFAM" id="SSF57095">
    <property type="entry name" value="Scorpion toxin-like"/>
    <property type="match status" value="1"/>
</dbReference>
<dbReference type="PROSITE" id="PS51863">
    <property type="entry name" value="LCN_CSAB"/>
    <property type="match status" value="1"/>
</dbReference>
<accession>P0DRC5</accession>
<reference key="1">
    <citation type="journal article" date="2021" name="Toxins">
        <title>Identification and characterization of novel proteins from Arizona Bark scorpion venom that inhibit Nav1.8, a voltage-gated sodium channel regulator of pain signaling.</title>
        <authorList>
            <person name="Abd El-Aziz T.M."/>
            <person name="Xiao Y."/>
            <person name="Kline J."/>
            <person name="Gridley H."/>
            <person name="Heaston A."/>
            <person name="Linse K.D."/>
            <person name="Ward M.J."/>
            <person name="Rokyta D.R."/>
            <person name="Stockand J.D."/>
            <person name="Cummins T.R."/>
            <person name="Fornelli L."/>
            <person name="Rowe A.H."/>
        </authorList>
    </citation>
    <scope>NUCLEOTIDE SEQUENCE [MRNA]</scope>
    <scope>PROTEIN SEQUENCE OF 37-61</scope>
    <scope>IDENTIFICATION BY MASS SPECTROMETRY</scope>
    <scope>SUBCELLULAR LOCATION</scope>
    <source>
        <tissue>Venom</tissue>
        <tissue>Venom gland</tissue>
    </source>
</reference>
<reference key="2">
    <citation type="journal article" date="2022" name="Front. Pharmacol.">
        <title>Structural and functional characterization of a novel scorpion toxin that inhibits NaV1.8 via interactions with the DI voltage sensor and DII pore module.</title>
        <authorList>
            <person name="George K."/>
            <person name="Lopez-Mateos D."/>
            <person name="Abd El-Aziz T.M."/>
            <person name="Xiao Y."/>
            <person name="Kline J."/>
            <person name="Bao H."/>
            <person name="Raza S."/>
            <person name="Stockand J.D."/>
            <person name="Cummins T.R."/>
            <person name="Fornelli L."/>
            <person name="Rowe M.P."/>
            <person name="Yarov-Yarovoy V."/>
            <person name="Rowe A.H."/>
        </authorList>
    </citation>
    <scope>ACTIVITY ON NAV1.8/SCN10A CHANNEL</scope>
    <scope>SYNTHESIS</scope>
</reference>
<protein>
    <recommendedName>
        <fullName evidence="4">Toxin NaTx-4</fullName>
    </recommendedName>
</protein>
<evidence type="ECO:0000255" key="1">
    <source>
        <dbReference type="PROSITE-ProRule" id="PRU01210"/>
    </source>
</evidence>
<evidence type="ECO:0000269" key="2">
    <source>
    </source>
</evidence>
<evidence type="ECO:0000269" key="3">
    <source>
    </source>
</evidence>
<evidence type="ECO:0000303" key="4">
    <source>
    </source>
</evidence>
<evidence type="ECO:0000305" key="5"/>
<evidence type="ECO:0000305" key="6">
    <source>
    </source>
</evidence>
<feature type="chain" id="PRO_0000459708" description="Toxin NaTx-4" evidence="6">
    <location>
        <begin position="1"/>
        <end position="66"/>
    </location>
</feature>
<feature type="domain" description="LCN-type CS-alpha/beta" evidence="1">
    <location>
        <begin position="1"/>
        <end position="64"/>
    </location>
</feature>
<feature type="disulfide bond" evidence="1">
    <location>
        <begin position="12"/>
        <end position="63"/>
    </location>
</feature>
<feature type="disulfide bond" evidence="1">
    <location>
        <begin position="16"/>
        <end position="39"/>
    </location>
</feature>
<feature type="disulfide bond" evidence="1">
    <location>
        <begin position="25"/>
        <end position="44"/>
    </location>
</feature>
<feature type="disulfide bond" evidence="1">
    <location>
        <begin position="29"/>
        <end position="46"/>
    </location>
</feature>